<organismHost>
    <name type="scientific">Bos taurus</name>
    <name type="common">Bovine</name>
    <dbReference type="NCBI Taxonomy" id="9913"/>
</organismHost>
<dbReference type="EMBL" id="S40504">
    <property type="protein sequence ID" value="AAB22601.1"/>
    <property type="molecule type" value="mRNA"/>
</dbReference>
<dbReference type="PIR" id="JQ1533">
    <property type="entry name" value="JQ1533"/>
</dbReference>
<dbReference type="SMR" id="P35943"/>
<dbReference type="GO" id="GO:0019029">
    <property type="term" value="C:helical viral capsid"/>
    <property type="evidence" value="ECO:0007669"/>
    <property type="project" value="UniProtKB-KW"/>
</dbReference>
<dbReference type="GO" id="GO:0030430">
    <property type="term" value="C:host cell cytoplasm"/>
    <property type="evidence" value="ECO:0007669"/>
    <property type="project" value="UniProtKB-SubCell"/>
</dbReference>
<dbReference type="GO" id="GO:1990904">
    <property type="term" value="C:ribonucleoprotein complex"/>
    <property type="evidence" value="ECO:0007669"/>
    <property type="project" value="UniProtKB-KW"/>
</dbReference>
<dbReference type="GO" id="GO:0019013">
    <property type="term" value="C:viral nucleocapsid"/>
    <property type="evidence" value="ECO:0007669"/>
    <property type="project" value="UniProtKB-KW"/>
</dbReference>
<dbReference type="GO" id="GO:0030291">
    <property type="term" value="F:protein serine/threonine kinase inhibitor activity"/>
    <property type="evidence" value="ECO:0007669"/>
    <property type="project" value="UniProtKB-KW"/>
</dbReference>
<dbReference type="GO" id="GO:0003723">
    <property type="term" value="F:RNA binding"/>
    <property type="evidence" value="ECO:0007669"/>
    <property type="project" value="UniProtKB-KW"/>
</dbReference>
<dbReference type="GO" id="GO:0039545">
    <property type="term" value="P:symbiont-mediated suppression of host cytoplasmic pattern recognition receptor signaling pathway via inhibition of MAVS activity"/>
    <property type="evidence" value="ECO:0007669"/>
    <property type="project" value="UniProtKB-KW"/>
</dbReference>
<dbReference type="GO" id="GO:0039554">
    <property type="term" value="P:symbiont-mediated suppression of host cytoplasmic pattern recognition receptor signaling pathway via inhibition of MDA-5 activity"/>
    <property type="evidence" value="ECO:0007669"/>
    <property type="project" value="UniProtKB-KW"/>
</dbReference>
<dbReference type="GO" id="GO:0085034">
    <property type="term" value="P:symbiont-mediated suppression of host NF-kappaB cascade"/>
    <property type="evidence" value="ECO:0007669"/>
    <property type="project" value="UniProtKB-KW"/>
</dbReference>
<dbReference type="GO" id="GO:0039580">
    <property type="term" value="P:symbiont-mediated suppression of host PKR/eIFalpha signaling"/>
    <property type="evidence" value="ECO:0007669"/>
    <property type="project" value="UniProtKB-KW"/>
</dbReference>
<dbReference type="GO" id="GO:0039502">
    <property type="term" value="P:symbiont-mediated suppression of host type I interferon-mediated signaling pathway"/>
    <property type="evidence" value="ECO:0007669"/>
    <property type="project" value="UniProtKB-KW"/>
</dbReference>
<dbReference type="InterPro" id="IPR004930">
    <property type="entry name" value="Pneumo_ncap"/>
</dbReference>
<dbReference type="Pfam" id="PF03246">
    <property type="entry name" value="Pneumo_ncap"/>
    <property type="match status" value="1"/>
</dbReference>
<reference key="1">
    <citation type="journal article" date="1992" name="J. Gen. Virol.">
        <title>Bovine respiratory syncytial virus nucleocapsid protein: mRNA sequence analysis and expression from recombinant vaccinia virus vectors.</title>
        <authorList>
            <person name="Amann V.L."/>
            <person name="Lerch R.A."/>
            <person name="Anderson K."/>
            <person name="Wertz G.W."/>
        </authorList>
    </citation>
    <scope>NUCLEOTIDE SEQUENCE [MRNA]</scope>
</reference>
<organism>
    <name type="scientific">Bovine respiratory syncytial virus (strain 391-2)</name>
    <name type="common">BRS</name>
    <dbReference type="NCBI Taxonomy" id="31611"/>
    <lineage>
        <taxon>Viruses</taxon>
        <taxon>Riboviria</taxon>
        <taxon>Orthornavirae</taxon>
        <taxon>Negarnaviricota</taxon>
        <taxon>Haploviricotina</taxon>
        <taxon>Monjiviricetes</taxon>
        <taxon>Mononegavirales</taxon>
        <taxon>Pneumoviridae</taxon>
        <taxon>Orthopneumovirus</taxon>
        <taxon>Orthopneumovirus bovis</taxon>
    </lineage>
</organism>
<feature type="chain" id="PRO_0000142647" description="Nucleoprotein">
    <location>
        <begin position="1"/>
        <end position="391"/>
    </location>
</feature>
<feature type="region of interest" description="Involved in RNA synthesis and encapsidation" evidence="2">
    <location>
        <begin position="1"/>
        <end position="364"/>
    </location>
</feature>
<feature type="region of interest" description="Interaction with the phosphoprotein" evidence="2">
    <location>
        <begin position="244"/>
        <end position="290"/>
    </location>
</feature>
<feature type="region of interest" description="Interaction with the phosphoprotein" evidence="2">
    <location>
        <begin position="338"/>
        <end position="364"/>
    </location>
</feature>
<feature type="modified residue" description="Phosphotyrosine" evidence="1">
    <location>
        <position position="38"/>
    </location>
</feature>
<accession>P35943</accession>
<proteinExistence type="evidence at transcript level"/>
<evidence type="ECO:0000250" key="1">
    <source>
        <dbReference type="UniProtKB" id="P03418"/>
    </source>
</evidence>
<evidence type="ECO:0000250" key="2">
    <source>
        <dbReference type="UniProtKB" id="P22677"/>
    </source>
</evidence>
<evidence type="ECO:0000305" key="3"/>
<comment type="function">
    <text evidence="1">Encapsidates the viral RNA genome by forming a left-handed helical nucleocapsid that protects the RNA from nucleases. RNA replication depends on the availability of soluble nucleoprotein. The encapsidated genomic RNA is termed the NC and serves as template for transcription and replication. Together with the phosphoprotein, sequesters host NF-kappa-B in inclusion bodies (IBs) thereby inhibiting this host defense pathway. May also act as a modulator of the innate immune response by sequestration of host IFIH1/MDA5 and MAVS into IBs.</text>
</comment>
<comment type="subunit">
    <text evidence="1 2">Homomultimerizes to form the nucleocapsid. Binds to viral genomic RNA. Interacts with the phosphoprotein P. When in a monomeric RNA-free form, interacts with the phosphoprotein (via N-terminus). Interacts with protein M2-1; this interaction allows the association of nucleocapsid with the matrix protein. Interacts with host EIF2AK2/PKR; this interaction inhibits EIF2AK2 phosphorylation of EIF2S1 and blocks EIF2AK2-mediated translation shutoff. Interacts with host EIF1AX; this interaction recruits EIF1AX to the viral replication complex to facilitate viral genomic RNA synthesis and virus production (By similarity). Interacts with host NF-kappa-B; this interaction sequesters NF-kappa-B in inclusion bodies (By similarity).</text>
</comment>
<comment type="subcellular location">
    <subcellularLocation>
        <location evidence="1">Virion</location>
    </subcellularLocation>
    <subcellularLocation>
        <location evidence="1">Host cytoplasm</location>
    </subcellularLocation>
    <text evidence="1">Localizes in cytoplasmic inclusion bodies.</text>
</comment>
<comment type="PTM">
    <text evidence="1">Tyrosine phosphorylation modulates viral transcription and replication.</text>
</comment>
<comment type="similarity">
    <text evidence="3">Belongs to the paramyxoviruses nucleocapsid family.</text>
</comment>
<sequence>MALSKVKLNDTFNKDQLLSTSKYTIQRSTGDNIDIPNYDVQKHLNKLCGMLLITEDANHKFTGLIGMLYAMSRLGREDTLKILKDAGYQVRANGVDVITHRQDVNGKEMKFEVLTLVSLTSEVQGNIEIESRKSYKKMLKEMGEVAPEYRHDFPDCGMIVLCVAALVITKLAAGDRSGLTAVIRRANNVLRNEMKRYKGLIPKDIANSFYEVFEKYPHYIDVFVHFGIAQSSTRGGSRVEGIFAGLFMNAYGAGQVMLRWGVLAKSVKNIMLGHASVQAEMEQVVEVYEYAQKLGGEAGFYHILNNPKASLLSLTQFPNFSSVVLGNAAGLGIMGEYRGTPRNQDLYDAAKAYAEQLKENGVINYSVLDLTTEELEAIKNQLNPKDNDVEL</sequence>
<gene>
    <name type="primary">N</name>
</gene>
<keyword id="KW-0167">Capsid protein</keyword>
<keyword id="KW-1139">Helical capsid protein</keyword>
<keyword id="KW-1035">Host cytoplasm</keyword>
<keyword id="KW-0945">Host-virus interaction</keyword>
<keyword id="KW-1090">Inhibition of host innate immune response by virus</keyword>
<keyword id="KW-1114">Inhibition of host interferon signaling pathway by virus</keyword>
<keyword id="KW-1097">Inhibition of host MAVS by virus</keyword>
<keyword id="KW-1089">Inhibition of host MDA5 by virus</keyword>
<keyword id="KW-1100">Inhibition of host NF-kappa-B by virus</keyword>
<keyword id="KW-1102">Inhibition of host PKR by virus</keyword>
<keyword id="KW-1113">Inhibition of host RLR pathway by virus</keyword>
<keyword id="KW-0922">Interferon antiviral system evasion</keyword>
<keyword id="KW-0597">Phosphoprotein</keyword>
<keyword id="KW-0687">Ribonucleoprotein</keyword>
<keyword id="KW-0694">RNA-binding</keyword>
<keyword id="KW-0899">Viral immunoevasion</keyword>
<keyword id="KW-0543">Viral nucleoprotein</keyword>
<keyword id="KW-0946">Virion</keyword>
<name>NCAP_BRSV3</name>
<protein>
    <recommendedName>
        <fullName>Nucleoprotein</fullName>
        <shortName>Protein N</shortName>
    </recommendedName>
    <alternativeName>
        <fullName>Nucleocapsid protein</fullName>
    </alternativeName>
</protein>